<sequence>MSTNRKNDMMVYCSFCGKNQEEVQKIIAGNNAFICNECVELAQEIIREELVEEVLADLSEVPKPIELLHILNHYVIGQDRAKRALAVAVYNHYKRINFHDTREESEDVDLQKSNILMIGPTGSGKTFLAQTLAKSLNVPFAIADATALTEAGYVGEDVENILLKLLQVADFNIERAERGIIYVDEIDKIAKKSENVSITRDVSGEGVQQALLKIIEGTVASVPPQGGRKHPQQEMIQVDTKNILFIVGGAFDGIEEIVKQRLGEKVIGFGQNNKAIDENSSYMQEIIAEDIQKFGIIPELIGRLPVFAALEQLTVDDLVRILKEPRNALVKQYQTLLSYDDVELEFDDEALQEIANKAIERKTGARGLRSIIEETMLDVMFEVPSQENVKLVRITKETVDGTDKPILETA</sequence>
<organism>
    <name type="scientific">Streptococcus pneumoniae serotype 4 (strain ATCC BAA-334 / TIGR4)</name>
    <dbReference type="NCBI Taxonomy" id="170187"/>
    <lineage>
        <taxon>Bacteria</taxon>
        <taxon>Bacillati</taxon>
        <taxon>Bacillota</taxon>
        <taxon>Bacilli</taxon>
        <taxon>Lactobacillales</taxon>
        <taxon>Streptococcaceae</taxon>
        <taxon>Streptococcus</taxon>
    </lineage>
</organism>
<evidence type="ECO:0000255" key="1">
    <source>
        <dbReference type="HAMAP-Rule" id="MF_00175"/>
    </source>
</evidence>
<evidence type="ECO:0000255" key="2">
    <source>
        <dbReference type="PROSITE-ProRule" id="PRU01250"/>
    </source>
</evidence>
<name>CLPX_STRPN</name>
<gene>
    <name evidence="1" type="primary">clpX</name>
    <name type="ordered locus">SP_1569</name>
</gene>
<protein>
    <recommendedName>
        <fullName evidence="1">ATP-dependent Clp protease ATP-binding subunit ClpX</fullName>
    </recommendedName>
</protein>
<feature type="chain" id="PRO_0000160432" description="ATP-dependent Clp protease ATP-binding subunit ClpX">
    <location>
        <begin position="1"/>
        <end position="410"/>
    </location>
</feature>
<feature type="domain" description="ClpX-type ZB" evidence="2">
    <location>
        <begin position="1"/>
        <end position="54"/>
    </location>
</feature>
<feature type="binding site" evidence="2">
    <location>
        <position position="13"/>
    </location>
    <ligand>
        <name>Zn(2+)</name>
        <dbReference type="ChEBI" id="CHEBI:29105"/>
    </ligand>
</feature>
<feature type="binding site" evidence="2">
    <location>
        <position position="16"/>
    </location>
    <ligand>
        <name>Zn(2+)</name>
        <dbReference type="ChEBI" id="CHEBI:29105"/>
    </ligand>
</feature>
<feature type="binding site" evidence="2">
    <location>
        <position position="35"/>
    </location>
    <ligand>
        <name>Zn(2+)</name>
        <dbReference type="ChEBI" id="CHEBI:29105"/>
    </ligand>
</feature>
<feature type="binding site" evidence="2">
    <location>
        <position position="38"/>
    </location>
    <ligand>
        <name>Zn(2+)</name>
        <dbReference type="ChEBI" id="CHEBI:29105"/>
    </ligand>
</feature>
<feature type="binding site" evidence="1">
    <location>
        <begin position="120"/>
        <end position="127"/>
    </location>
    <ligand>
        <name>ATP</name>
        <dbReference type="ChEBI" id="CHEBI:30616"/>
    </ligand>
</feature>
<proteinExistence type="inferred from homology"/>
<comment type="function">
    <text evidence="1">ATP-dependent specificity component of the Clp protease. It directs the protease to specific substrates. Can perform chaperone functions in the absence of ClpP.</text>
</comment>
<comment type="subunit">
    <text evidence="1">Component of the ClpX-ClpP complex. Forms a hexameric ring that, in the presence of ATP, binds to fourteen ClpP subunits assembled into a disk-like structure with a central cavity, resembling the structure of eukaryotic proteasomes.</text>
</comment>
<comment type="similarity">
    <text evidence="1">Belongs to the ClpX chaperone family.</text>
</comment>
<reference key="1">
    <citation type="journal article" date="2001" name="Science">
        <title>Complete genome sequence of a virulent isolate of Streptococcus pneumoniae.</title>
        <authorList>
            <person name="Tettelin H."/>
            <person name="Nelson K.E."/>
            <person name="Paulsen I.T."/>
            <person name="Eisen J.A."/>
            <person name="Read T.D."/>
            <person name="Peterson S.N."/>
            <person name="Heidelberg J.F."/>
            <person name="DeBoy R.T."/>
            <person name="Haft D.H."/>
            <person name="Dodson R.J."/>
            <person name="Durkin A.S."/>
            <person name="Gwinn M.L."/>
            <person name="Kolonay J.F."/>
            <person name="Nelson W.C."/>
            <person name="Peterson J.D."/>
            <person name="Umayam L.A."/>
            <person name="White O."/>
            <person name="Salzberg S.L."/>
            <person name="Lewis M.R."/>
            <person name="Radune D."/>
            <person name="Holtzapple E.K."/>
            <person name="Khouri H.M."/>
            <person name="Wolf A.M."/>
            <person name="Utterback T.R."/>
            <person name="Hansen C.L."/>
            <person name="McDonald L.A."/>
            <person name="Feldblyum T.V."/>
            <person name="Angiuoli S.V."/>
            <person name="Dickinson T."/>
            <person name="Hickey E.K."/>
            <person name="Holt I.E."/>
            <person name="Loftus B.J."/>
            <person name="Yang F."/>
            <person name="Smith H.O."/>
            <person name="Venter J.C."/>
            <person name="Dougherty B.A."/>
            <person name="Morrison D.A."/>
            <person name="Hollingshead S.K."/>
            <person name="Fraser C.M."/>
        </authorList>
    </citation>
    <scope>NUCLEOTIDE SEQUENCE [LARGE SCALE GENOMIC DNA]</scope>
    <source>
        <strain>ATCC BAA-334 / TIGR4</strain>
    </source>
</reference>
<accession>P63791</accession>
<accession>Q97PN4</accession>
<dbReference type="EMBL" id="AE005672">
    <property type="protein sequence ID" value="AAK75656.1"/>
    <property type="molecule type" value="Genomic_DNA"/>
</dbReference>
<dbReference type="PIR" id="G95182">
    <property type="entry name" value="G95182"/>
</dbReference>
<dbReference type="RefSeq" id="WP_000106346.1">
    <property type="nucleotide sequence ID" value="NZ_CP155539.1"/>
</dbReference>
<dbReference type="SMR" id="P63791"/>
<dbReference type="PaxDb" id="170187-SP_1569"/>
<dbReference type="EnsemblBacteria" id="AAK75656">
    <property type="protein sequence ID" value="AAK75656"/>
    <property type="gene ID" value="SP_1569"/>
</dbReference>
<dbReference type="GeneID" id="45653193"/>
<dbReference type="KEGG" id="spn:SP_1569"/>
<dbReference type="eggNOG" id="COG1219">
    <property type="taxonomic scope" value="Bacteria"/>
</dbReference>
<dbReference type="PhylomeDB" id="P63791"/>
<dbReference type="BioCyc" id="SPNE170187:G1FZB-1588-MONOMER"/>
<dbReference type="Proteomes" id="UP000000585">
    <property type="component" value="Chromosome"/>
</dbReference>
<dbReference type="GO" id="GO:0009376">
    <property type="term" value="C:HslUV protease complex"/>
    <property type="evidence" value="ECO:0007669"/>
    <property type="project" value="TreeGrafter"/>
</dbReference>
<dbReference type="GO" id="GO:0005524">
    <property type="term" value="F:ATP binding"/>
    <property type="evidence" value="ECO:0007669"/>
    <property type="project" value="UniProtKB-UniRule"/>
</dbReference>
<dbReference type="GO" id="GO:0016887">
    <property type="term" value="F:ATP hydrolysis activity"/>
    <property type="evidence" value="ECO:0007669"/>
    <property type="project" value="InterPro"/>
</dbReference>
<dbReference type="GO" id="GO:0140662">
    <property type="term" value="F:ATP-dependent protein folding chaperone"/>
    <property type="evidence" value="ECO:0007669"/>
    <property type="project" value="InterPro"/>
</dbReference>
<dbReference type="GO" id="GO:0046983">
    <property type="term" value="F:protein dimerization activity"/>
    <property type="evidence" value="ECO:0007669"/>
    <property type="project" value="InterPro"/>
</dbReference>
<dbReference type="GO" id="GO:0051082">
    <property type="term" value="F:unfolded protein binding"/>
    <property type="evidence" value="ECO:0007669"/>
    <property type="project" value="UniProtKB-UniRule"/>
</dbReference>
<dbReference type="GO" id="GO:0008270">
    <property type="term" value="F:zinc ion binding"/>
    <property type="evidence" value="ECO:0007669"/>
    <property type="project" value="InterPro"/>
</dbReference>
<dbReference type="GO" id="GO:0051301">
    <property type="term" value="P:cell division"/>
    <property type="evidence" value="ECO:0007669"/>
    <property type="project" value="TreeGrafter"/>
</dbReference>
<dbReference type="GO" id="GO:0051603">
    <property type="term" value="P:proteolysis involved in protein catabolic process"/>
    <property type="evidence" value="ECO:0007669"/>
    <property type="project" value="TreeGrafter"/>
</dbReference>
<dbReference type="CDD" id="cd19497">
    <property type="entry name" value="RecA-like_ClpX"/>
    <property type="match status" value="1"/>
</dbReference>
<dbReference type="FunFam" id="1.10.8.60:FF:000002">
    <property type="entry name" value="ATP-dependent Clp protease ATP-binding subunit ClpX"/>
    <property type="match status" value="1"/>
</dbReference>
<dbReference type="FunFam" id="3.40.50.300:FF:000005">
    <property type="entry name" value="ATP-dependent Clp protease ATP-binding subunit ClpX"/>
    <property type="match status" value="1"/>
</dbReference>
<dbReference type="Gene3D" id="1.10.8.60">
    <property type="match status" value="1"/>
</dbReference>
<dbReference type="Gene3D" id="6.20.220.10">
    <property type="entry name" value="ClpX chaperone, C4-type zinc finger domain"/>
    <property type="match status" value="1"/>
</dbReference>
<dbReference type="Gene3D" id="3.40.50.300">
    <property type="entry name" value="P-loop containing nucleotide triphosphate hydrolases"/>
    <property type="match status" value="1"/>
</dbReference>
<dbReference type="HAMAP" id="MF_00175">
    <property type="entry name" value="ClpX"/>
    <property type="match status" value="1"/>
</dbReference>
<dbReference type="InterPro" id="IPR003593">
    <property type="entry name" value="AAA+_ATPase"/>
</dbReference>
<dbReference type="InterPro" id="IPR050052">
    <property type="entry name" value="ATP-dep_Clp_protease_ClpX"/>
</dbReference>
<dbReference type="InterPro" id="IPR003959">
    <property type="entry name" value="ATPase_AAA_core"/>
</dbReference>
<dbReference type="InterPro" id="IPR019489">
    <property type="entry name" value="Clp_ATPase_C"/>
</dbReference>
<dbReference type="InterPro" id="IPR004487">
    <property type="entry name" value="Clp_protease_ATP-bd_su_ClpX"/>
</dbReference>
<dbReference type="InterPro" id="IPR046425">
    <property type="entry name" value="ClpX_bact"/>
</dbReference>
<dbReference type="InterPro" id="IPR027417">
    <property type="entry name" value="P-loop_NTPase"/>
</dbReference>
<dbReference type="InterPro" id="IPR010603">
    <property type="entry name" value="Znf_CppX_C4"/>
</dbReference>
<dbReference type="InterPro" id="IPR038366">
    <property type="entry name" value="Znf_CppX_C4_sf"/>
</dbReference>
<dbReference type="NCBIfam" id="TIGR00382">
    <property type="entry name" value="clpX"/>
    <property type="match status" value="1"/>
</dbReference>
<dbReference type="NCBIfam" id="NF003745">
    <property type="entry name" value="PRK05342.1"/>
    <property type="match status" value="1"/>
</dbReference>
<dbReference type="PANTHER" id="PTHR48102:SF7">
    <property type="entry name" value="ATP-DEPENDENT CLP PROTEASE ATP-BINDING SUBUNIT CLPX-LIKE, MITOCHONDRIAL"/>
    <property type="match status" value="1"/>
</dbReference>
<dbReference type="PANTHER" id="PTHR48102">
    <property type="entry name" value="ATP-DEPENDENT CLP PROTEASE ATP-BINDING SUBUNIT CLPX-LIKE, MITOCHONDRIAL-RELATED"/>
    <property type="match status" value="1"/>
</dbReference>
<dbReference type="Pfam" id="PF07724">
    <property type="entry name" value="AAA_2"/>
    <property type="match status" value="1"/>
</dbReference>
<dbReference type="Pfam" id="PF10431">
    <property type="entry name" value="ClpB_D2-small"/>
    <property type="match status" value="1"/>
</dbReference>
<dbReference type="Pfam" id="PF06689">
    <property type="entry name" value="zf-C4_ClpX"/>
    <property type="match status" value="1"/>
</dbReference>
<dbReference type="SMART" id="SM00382">
    <property type="entry name" value="AAA"/>
    <property type="match status" value="1"/>
</dbReference>
<dbReference type="SMART" id="SM01086">
    <property type="entry name" value="ClpB_D2-small"/>
    <property type="match status" value="1"/>
</dbReference>
<dbReference type="SMART" id="SM00994">
    <property type="entry name" value="zf-C4_ClpX"/>
    <property type="match status" value="1"/>
</dbReference>
<dbReference type="SUPFAM" id="SSF57716">
    <property type="entry name" value="Glucocorticoid receptor-like (DNA-binding domain)"/>
    <property type="match status" value="1"/>
</dbReference>
<dbReference type="SUPFAM" id="SSF52540">
    <property type="entry name" value="P-loop containing nucleoside triphosphate hydrolases"/>
    <property type="match status" value="1"/>
</dbReference>
<dbReference type="PROSITE" id="PS51902">
    <property type="entry name" value="CLPX_ZB"/>
    <property type="match status" value="1"/>
</dbReference>
<keyword id="KW-0067">ATP-binding</keyword>
<keyword id="KW-0143">Chaperone</keyword>
<keyword id="KW-0479">Metal-binding</keyword>
<keyword id="KW-0547">Nucleotide-binding</keyword>
<keyword id="KW-1185">Reference proteome</keyword>
<keyword id="KW-0862">Zinc</keyword>